<organism>
    <name type="scientific">Shewanella pealeana (strain ATCC 700345 / ANG-SQ1)</name>
    <dbReference type="NCBI Taxonomy" id="398579"/>
    <lineage>
        <taxon>Bacteria</taxon>
        <taxon>Pseudomonadati</taxon>
        <taxon>Pseudomonadota</taxon>
        <taxon>Gammaproteobacteria</taxon>
        <taxon>Alteromonadales</taxon>
        <taxon>Shewanellaceae</taxon>
        <taxon>Shewanella</taxon>
    </lineage>
</organism>
<sequence length="339" mass="37714">MIRVAINGYGRIGRSILRALYESAKRDRIQIVAINELAKPEAMLHLTQYDTTHGRFHTQVKLDNQHMIIGDDAIKLLHEPDPAKLPWKEMDIDIVFEATGVINDRLECEAHIQAGAKQVLISHPSSSDVDATIVFGVNQDLLKAEHTVVSNASCTTNCIVPVIDVLDRHFEVKSGAITTIHSAMNDQQVIDAYHDDLRRTRAAGQSIIPVDTKLARGIERILPHMKDKFEAISVRVPTINVTAIDLSVTLNKRVDIETVNQVLKQATEGSFSGVVGFTNEPLVSCDFNHDPRSSIVDGTQTRVSDGHLVKLLLWCDNEWGFANRMLDTSLEMIKAKSRT</sequence>
<gene>
    <name evidence="1" type="primary">epd</name>
    <name type="ordered locus">Spea_0789</name>
</gene>
<accession>A8H0M9</accession>
<feature type="chain" id="PRO_1000088210" description="D-erythrose-4-phosphate dehydrogenase">
    <location>
        <begin position="1"/>
        <end position="339"/>
    </location>
</feature>
<feature type="active site" description="Nucleophile" evidence="1">
    <location>
        <position position="154"/>
    </location>
</feature>
<feature type="binding site" evidence="1">
    <location>
        <begin position="11"/>
        <end position="12"/>
    </location>
    <ligand>
        <name>NAD(+)</name>
        <dbReference type="ChEBI" id="CHEBI:57540"/>
    </ligand>
</feature>
<feature type="binding site" evidence="1">
    <location>
        <begin position="153"/>
        <end position="155"/>
    </location>
    <ligand>
        <name>substrate</name>
    </ligand>
</feature>
<feature type="binding site" evidence="1">
    <location>
        <position position="199"/>
    </location>
    <ligand>
        <name>substrate</name>
    </ligand>
</feature>
<feature type="binding site" evidence="1">
    <location>
        <begin position="212"/>
        <end position="213"/>
    </location>
    <ligand>
        <name>substrate</name>
    </ligand>
</feature>
<feature type="binding site" evidence="1">
    <location>
        <position position="235"/>
    </location>
    <ligand>
        <name>substrate</name>
    </ligand>
</feature>
<feature type="binding site" evidence="1">
    <location>
        <position position="317"/>
    </location>
    <ligand>
        <name>NAD(+)</name>
        <dbReference type="ChEBI" id="CHEBI:57540"/>
    </ligand>
</feature>
<feature type="site" description="Activates thiol group during catalysis" evidence="1">
    <location>
        <position position="181"/>
    </location>
</feature>
<protein>
    <recommendedName>
        <fullName evidence="1">D-erythrose-4-phosphate dehydrogenase</fullName>
        <shortName evidence="1">E4PDH</shortName>
        <ecNumber evidence="1">1.2.1.72</ecNumber>
    </recommendedName>
</protein>
<proteinExistence type="inferred from homology"/>
<comment type="function">
    <text evidence="1">Catalyzes the NAD-dependent conversion of D-erythrose 4-phosphate to 4-phosphoerythronate.</text>
</comment>
<comment type="catalytic activity">
    <reaction evidence="1">
        <text>D-erythrose 4-phosphate + NAD(+) + H2O = 4-phospho-D-erythronate + NADH + 2 H(+)</text>
        <dbReference type="Rhea" id="RHEA:12056"/>
        <dbReference type="ChEBI" id="CHEBI:15377"/>
        <dbReference type="ChEBI" id="CHEBI:15378"/>
        <dbReference type="ChEBI" id="CHEBI:16897"/>
        <dbReference type="ChEBI" id="CHEBI:57540"/>
        <dbReference type="ChEBI" id="CHEBI:57945"/>
        <dbReference type="ChEBI" id="CHEBI:58766"/>
        <dbReference type="EC" id="1.2.1.72"/>
    </reaction>
</comment>
<comment type="pathway">
    <text evidence="1">Cofactor biosynthesis; pyridoxine 5'-phosphate biosynthesis; pyridoxine 5'-phosphate from D-erythrose 4-phosphate: step 1/5.</text>
</comment>
<comment type="subunit">
    <text evidence="1">Homotetramer.</text>
</comment>
<comment type="subcellular location">
    <subcellularLocation>
        <location evidence="1">Cytoplasm</location>
    </subcellularLocation>
</comment>
<comment type="similarity">
    <text evidence="1">Belongs to the glyceraldehyde-3-phosphate dehydrogenase family. Epd subfamily.</text>
</comment>
<dbReference type="EC" id="1.2.1.72" evidence="1"/>
<dbReference type="EMBL" id="CP000851">
    <property type="protein sequence ID" value="ABV86116.1"/>
    <property type="molecule type" value="Genomic_DNA"/>
</dbReference>
<dbReference type="RefSeq" id="WP_012154052.1">
    <property type="nucleotide sequence ID" value="NC_009901.1"/>
</dbReference>
<dbReference type="SMR" id="A8H0M9"/>
<dbReference type="STRING" id="398579.Spea_0789"/>
<dbReference type="KEGG" id="spl:Spea_0789"/>
<dbReference type="eggNOG" id="COG0057">
    <property type="taxonomic scope" value="Bacteria"/>
</dbReference>
<dbReference type="HOGENOM" id="CLU_030140_0_2_6"/>
<dbReference type="OrthoDB" id="9803304at2"/>
<dbReference type="UniPathway" id="UPA00244">
    <property type="reaction ID" value="UER00309"/>
</dbReference>
<dbReference type="Proteomes" id="UP000002608">
    <property type="component" value="Chromosome"/>
</dbReference>
<dbReference type="GO" id="GO:0005737">
    <property type="term" value="C:cytoplasm"/>
    <property type="evidence" value="ECO:0007669"/>
    <property type="project" value="UniProtKB-SubCell"/>
</dbReference>
<dbReference type="GO" id="GO:0048001">
    <property type="term" value="F:erythrose-4-phosphate dehydrogenase activity"/>
    <property type="evidence" value="ECO:0007669"/>
    <property type="project" value="UniProtKB-UniRule"/>
</dbReference>
<dbReference type="GO" id="GO:0051287">
    <property type="term" value="F:NAD binding"/>
    <property type="evidence" value="ECO:0007669"/>
    <property type="project" value="InterPro"/>
</dbReference>
<dbReference type="GO" id="GO:0050661">
    <property type="term" value="F:NADP binding"/>
    <property type="evidence" value="ECO:0007669"/>
    <property type="project" value="InterPro"/>
</dbReference>
<dbReference type="GO" id="GO:0006006">
    <property type="term" value="P:glucose metabolic process"/>
    <property type="evidence" value="ECO:0007669"/>
    <property type="project" value="InterPro"/>
</dbReference>
<dbReference type="GO" id="GO:0042823">
    <property type="term" value="P:pyridoxal phosphate biosynthetic process"/>
    <property type="evidence" value="ECO:0007669"/>
    <property type="project" value="UniProtKB-UniRule"/>
</dbReference>
<dbReference type="GO" id="GO:0008615">
    <property type="term" value="P:pyridoxine biosynthetic process"/>
    <property type="evidence" value="ECO:0007669"/>
    <property type="project" value="UniProtKB-UniRule"/>
</dbReference>
<dbReference type="CDD" id="cd23937">
    <property type="entry name" value="GAPDH_C_E4PDH"/>
    <property type="match status" value="1"/>
</dbReference>
<dbReference type="CDD" id="cd17892">
    <property type="entry name" value="GAPDH_N_E4PDH"/>
    <property type="match status" value="1"/>
</dbReference>
<dbReference type="FunFam" id="3.30.360.10:FF:000007">
    <property type="entry name" value="D-erythrose-4-phosphate dehydrogenase"/>
    <property type="match status" value="1"/>
</dbReference>
<dbReference type="FunFam" id="3.40.50.720:FF:000001">
    <property type="entry name" value="Glyceraldehyde-3-phosphate dehydrogenase"/>
    <property type="match status" value="1"/>
</dbReference>
<dbReference type="Gene3D" id="3.30.360.10">
    <property type="entry name" value="Dihydrodipicolinate Reductase, domain 2"/>
    <property type="match status" value="1"/>
</dbReference>
<dbReference type="Gene3D" id="3.40.50.720">
    <property type="entry name" value="NAD(P)-binding Rossmann-like Domain"/>
    <property type="match status" value="1"/>
</dbReference>
<dbReference type="HAMAP" id="MF_01640">
    <property type="entry name" value="E4P_dehydrog"/>
    <property type="match status" value="1"/>
</dbReference>
<dbReference type="InterPro" id="IPR006422">
    <property type="entry name" value="E4P_DH_bac"/>
</dbReference>
<dbReference type="InterPro" id="IPR020831">
    <property type="entry name" value="GlycerAld/Erythrose_P_DH"/>
</dbReference>
<dbReference type="InterPro" id="IPR020830">
    <property type="entry name" value="GlycerAld_3-P_DH_AS"/>
</dbReference>
<dbReference type="InterPro" id="IPR020829">
    <property type="entry name" value="GlycerAld_3-P_DH_cat"/>
</dbReference>
<dbReference type="InterPro" id="IPR020828">
    <property type="entry name" value="GlycerAld_3-P_DH_NAD(P)-bd"/>
</dbReference>
<dbReference type="InterPro" id="IPR006424">
    <property type="entry name" value="Glyceraldehyde-3-P_DH_1"/>
</dbReference>
<dbReference type="InterPro" id="IPR036291">
    <property type="entry name" value="NAD(P)-bd_dom_sf"/>
</dbReference>
<dbReference type="NCBIfam" id="TIGR01532">
    <property type="entry name" value="E4PD_g-proteo"/>
    <property type="match status" value="1"/>
</dbReference>
<dbReference type="NCBIfam" id="TIGR01534">
    <property type="entry name" value="GAPDH-I"/>
    <property type="match status" value="1"/>
</dbReference>
<dbReference type="NCBIfam" id="NF010058">
    <property type="entry name" value="PRK13535.1"/>
    <property type="match status" value="1"/>
</dbReference>
<dbReference type="PANTHER" id="PTHR43148">
    <property type="entry name" value="GLYCERALDEHYDE-3-PHOSPHATE DEHYDROGENASE 2"/>
    <property type="match status" value="1"/>
</dbReference>
<dbReference type="Pfam" id="PF02800">
    <property type="entry name" value="Gp_dh_C"/>
    <property type="match status" value="1"/>
</dbReference>
<dbReference type="Pfam" id="PF00044">
    <property type="entry name" value="Gp_dh_N"/>
    <property type="match status" value="1"/>
</dbReference>
<dbReference type="PIRSF" id="PIRSF000149">
    <property type="entry name" value="GAP_DH"/>
    <property type="match status" value="1"/>
</dbReference>
<dbReference type="PRINTS" id="PR00078">
    <property type="entry name" value="G3PDHDRGNASE"/>
</dbReference>
<dbReference type="SMART" id="SM00846">
    <property type="entry name" value="Gp_dh_N"/>
    <property type="match status" value="1"/>
</dbReference>
<dbReference type="SUPFAM" id="SSF55347">
    <property type="entry name" value="Glyceraldehyde-3-phosphate dehydrogenase-like, C-terminal domain"/>
    <property type="match status" value="1"/>
</dbReference>
<dbReference type="SUPFAM" id="SSF51735">
    <property type="entry name" value="NAD(P)-binding Rossmann-fold domains"/>
    <property type="match status" value="1"/>
</dbReference>
<dbReference type="PROSITE" id="PS00071">
    <property type="entry name" value="GAPDH"/>
    <property type="match status" value="1"/>
</dbReference>
<reference key="1">
    <citation type="submission" date="2007-10" db="EMBL/GenBank/DDBJ databases">
        <title>Complete sequence of Shewanella pealeana ATCC 700345.</title>
        <authorList>
            <consortium name="US DOE Joint Genome Institute"/>
            <person name="Copeland A."/>
            <person name="Lucas S."/>
            <person name="Lapidus A."/>
            <person name="Barry K."/>
            <person name="Glavina del Rio T."/>
            <person name="Dalin E."/>
            <person name="Tice H."/>
            <person name="Pitluck S."/>
            <person name="Chertkov O."/>
            <person name="Brettin T."/>
            <person name="Bruce D."/>
            <person name="Detter J.C."/>
            <person name="Han C."/>
            <person name="Schmutz J."/>
            <person name="Larimer F."/>
            <person name="Land M."/>
            <person name="Hauser L."/>
            <person name="Kyrpides N."/>
            <person name="Kim E."/>
            <person name="Zhao J.-S.Z."/>
            <person name="Manno D."/>
            <person name="Hawari J."/>
            <person name="Richardson P."/>
        </authorList>
    </citation>
    <scope>NUCLEOTIDE SEQUENCE [LARGE SCALE GENOMIC DNA]</scope>
    <source>
        <strain>ATCC 700345 / ANG-SQ1</strain>
    </source>
</reference>
<name>E4PD_SHEPA</name>
<evidence type="ECO:0000255" key="1">
    <source>
        <dbReference type="HAMAP-Rule" id="MF_01640"/>
    </source>
</evidence>
<keyword id="KW-0963">Cytoplasm</keyword>
<keyword id="KW-0520">NAD</keyword>
<keyword id="KW-0560">Oxidoreductase</keyword>
<keyword id="KW-0664">Pyridoxine biosynthesis</keyword>
<keyword id="KW-1185">Reference proteome</keyword>